<keyword id="KW-0067">ATP-binding</keyword>
<keyword id="KW-0963">Cytoplasm</keyword>
<keyword id="KW-0418">Kinase</keyword>
<keyword id="KW-0460">Magnesium</keyword>
<keyword id="KW-0479">Metal-binding</keyword>
<keyword id="KW-0545">Nucleotide biosynthesis</keyword>
<keyword id="KW-0547">Nucleotide-binding</keyword>
<keyword id="KW-1185">Reference proteome</keyword>
<keyword id="KW-0808">Transferase</keyword>
<proteinExistence type="inferred from homology"/>
<feature type="chain" id="PRO_0000141241" description="Ribose-phosphate pyrophosphokinase">
    <location>
        <begin position="1"/>
        <end position="285"/>
    </location>
</feature>
<feature type="active site" evidence="1">
    <location>
        <position position="185"/>
    </location>
</feature>
<feature type="binding site" evidence="1">
    <location>
        <begin position="33"/>
        <end position="35"/>
    </location>
    <ligand>
        <name>ATP</name>
        <dbReference type="ChEBI" id="CHEBI:30616"/>
    </ligand>
</feature>
<feature type="binding site" evidence="1">
    <location>
        <begin position="91"/>
        <end position="92"/>
    </location>
    <ligand>
        <name>ATP</name>
        <dbReference type="ChEBI" id="CHEBI:30616"/>
    </ligand>
</feature>
<feature type="binding site" evidence="1">
    <location>
        <position position="125"/>
    </location>
    <ligand>
        <name>Mg(2+)</name>
        <dbReference type="ChEBI" id="CHEBI:18420"/>
        <label>1</label>
    </ligand>
</feature>
<feature type="binding site" evidence="1">
    <location>
        <position position="162"/>
    </location>
    <ligand>
        <name>Mg(2+)</name>
        <dbReference type="ChEBI" id="CHEBI:18420"/>
        <label>2</label>
    </ligand>
</feature>
<feature type="binding site" evidence="1">
    <location>
        <position position="187"/>
    </location>
    <ligand>
        <name>D-ribose 5-phosphate</name>
        <dbReference type="ChEBI" id="CHEBI:78346"/>
    </ligand>
</feature>
<feature type="binding site" evidence="1">
    <location>
        <position position="211"/>
    </location>
    <ligand>
        <name>D-ribose 5-phosphate</name>
        <dbReference type="ChEBI" id="CHEBI:78346"/>
    </ligand>
</feature>
<feature type="binding site" evidence="1">
    <location>
        <begin position="215"/>
        <end position="219"/>
    </location>
    <ligand>
        <name>D-ribose 5-phosphate</name>
        <dbReference type="ChEBI" id="CHEBI:78346"/>
    </ligand>
</feature>
<accession>O26877</accession>
<organism>
    <name type="scientific">Methanothermobacter thermautotrophicus (strain ATCC 29096 / DSM 1053 / JCM 10044 / NBRC 100330 / Delta H)</name>
    <name type="common">Methanobacterium thermoautotrophicum</name>
    <dbReference type="NCBI Taxonomy" id="187420"/>
    <lineage>
        <taxon>Archaea</taxon>
        <taxon>Methanobacteriati</taxon>
        <taxon>Methanobacteriota</taxon>
        <taxon>Methanomada group</taxon>
        <taxon>Methanobacteria</taxon>
        <taxon>Methanobacteriales</taxon>
        <taxon>Methanobacteriaceae</taxon>
        <taxon>Methanothermobacter</taxon>
    </lineage>
</organism>
<sequence>MIIGCSASQKLAASVADLLDEPLCPVETRKFPDGERYIRVKEEVEGEVTVVQSTGYPQDENLMELLFMIENLKDLGADYVRAAIPYFGYGRQERRFKSGEAVSAKIVAHLLEAAGADEIVTVNLHENCLSEFFRVPVRELSAMPLIAEHISFLDDPVIIAPDKGALGHAREVSDILGCECDYMEKVRISPEVVETRVSDLDVEGKDAVVVDDIISTGGTIVNAAGILGKCGASSITVCCVHPVLVEDALLKIFSAGVERVIATDTLKSDVSEISVAPLIADVMKD</sequence>
<evidence type="ECO:0000255" key="1">
    <source>
        <dbReference type="HAMAP-Rule" id="MF_00583"/>
    </source>
</evidence>
<reference key="1">
    <citation type="journal article" date="1997" name="J. Bacteriol.">
        <title>Complete genome sequence of Methanobacterium thermoautotrophicum deltaH: functional analysis and comparative genomics.</title>
        <authorList>
            <person name="Smith D.R."/>
            <person name="Doucette-Stamm L.A."/>
            <person name="Deloughery C."/>
            <person name="Lee H.-M."/>
            <person name="Dubois J."/>
            <person name="Aldredge T."/>
            <person name="Bashirzadeh R."/>
            <person name="Blakely D."/>
            <person name="Cook R."/>
            <person name="Gilbert K."/>
            <person name="Harrison D."/>
            <person name="Hoang L."/>
            <person name="Keagle P."/>
            <person name="Lumm W."/>
            <person name="Pothier B."/>
            <person name="Qiu D."/>
            <person name="Spadafora R."/>
            <person name="Vicare R."/>
            <person name="Wang Y."/>
            <person name="Wierzbowski J."/>
            <person name="Gibson R."/>
            <person name="Jiwani N."/>
            <person name="Caruso A."/>
            <person name="Bush D."/>
            <person name="Safer H."/>
            <person name="Patwell D."/>
            <person name="Prabhakar S."/>
            <person name="McDougall S."/>
            <person name="Shimer G."/>
            <person name="Goyal A."/>
            <person name="Pietrovski S."/>
            <person name="Church G.M."/>
            <person name="Daniels C.J."/>
            <person name="Mao J.-I."/>
            <person name="Rice P."/>
            <person name="Noelling J."/>
            <person name="Reeve J.N."/>
        </authorList>
    </citation>
    <scope>NUCLEOTIDE SEQUENCE [LARGE SCALE GENOMIC DNA]</scope>
    <source>
        <strain>ATCC 29096 / DSM 1053 / JCM 10044 / NBRC 100330 / Delta H</strain>
    </source>
</reference>
<dbReference type="EC" id="2.7.6.1" evidence="1"/>
<dbReference type="EMBL" id="AE000666">
    <property type="protein sequence ID" value="AAB85286.1"/>
    <property type="molecule type" value="Genomic_DNA"/>
</dbReference>
<dbReference type="PIR" id="G69204">
    <property type="entry name" value="G69204"/>
</dbReference>
<dbReference type="RefSeq" id="WP_010876421.1">
    <property type="nucleotide sequence ID" value="NC_000916.1"/>
</dbReference>
<dbReference type="SMR" id="O26877"/>
<dbReference type="FunCoup" id="O26877">
    <property type="interactions" value="197"/>
</dbReference>
<dbReference type="STRING" id="187420.MTH_784"/>
<dbReference type="PaxDb" id="187420-MTH_784"/>
<dbReference type="EnsemblBacteria" id="AAB85286">
    <property type="protein sequence ID" value="AAB85286"/>
    <property type="gene ID" value="MTH_784"/>
</dbReference>
<dbReference type="KEGG" id="mth:MTH_784"/>
<dbReference type="PATRIC" id="fig|187420.15.peg.771"/>
<dbReference type="HOGENOM" id="CLU_033546_2_2_2"/>
<dbReference type="InParanoid" id="O26877"/>
<dbReference type="UniPathway" id="UPA00087">
    <property type="reaction ID" value="UER00172"/>
</dbReference>
<dbReference type="Proteomes" id="UP000005223">
    <property type="component" value="Chromosome"/>
</dbReference>
<dbReference type="GO" id="GO:0005737">
    <property type="term" value="C:cytoplasm"/>
    <property type="evidence" value="ECO:0007669"/>
    <property type="project" value="UniProtKB-SubCell"/>
</dbReference>
<dbReference type="GO" id="GO:0002189">
    <property type="term" value="C:ribose phosphate diphosphokinase complex"/>
    <property type="evidence" value="ECO:0007669"/>
    <property type="project" value="TreeGrafter"/>
</dbReference>
<dbReference type="GO" id="GO:0005524">
    <property type="term" value="F:ATP binding"/>
    <property type="evidence" value="ECO:0007669"/>
    <property type="project" value="UniProtKB-KW"/>
</dbReference>
<dbReference type="GO" id="GO:0016301">
    <property type="term" value="F:kinase activity"/>
    <property type="evidence" value="ECO:0007669"/>
    <property type="project" value="UniProtKB-KW"/>
</dbReference>
<dbReference type="GO" id="GO:0000287">
    <property type="term" value="F:magnesium ion binding"/>
    <property type="evidence" value="ECO:0007669"/>
    <property type="project" value="UniProtKB-UniRule"/>
</dbReference>
<dbReference type="GO" id="GO:0004749">
    <property type="term" value="F:ribose phosphate diphosphokinase activity"/>
    <property type="evidence" value="ECO:0007669"/>
    <property type="project" value="UniProtKB-UniRule"/>
</dbReference>
<dbReference type="GO" id="GO:0006015">
    <property type="term" value="P:5-phosphoribose 1-diphosphate biosynthetic process"/>
    <property type="evidence" value="ECO:0007669"/>
    <property type="project" value="UniProtKB-UniRule"/>
</dbReference>
<dbReference type="GO" id="GO:0006164">
    <property type="term" value="P:purine nucleotide biosynthetic process"/>
    <property type="evidence" value="ECO:0007669"/>
    <property type="project" value="TreeGrafter"/>
</dbReference>
<dbReference type="CDD" id="cd06223">
    <property type="entry name" value="PRTases_typeI"/>
    <property type="match status" value="1"/>
</dbReference>
<dbReference type="FunFam" id="3.40.50.2020:FF:000007">
    <property type="entry name" value="Ribose-phosphate pyrophosphokinase"/>
    <property type="match status" value="1"/>
</dbReference>
<dbReference type="Gene3D" id="3.40.50.2020">
    <property type="match status" value="2"/>
</dbReference>
<dbReference type="HAMAP" id="MF_00583_A">
    <property type="entry name" value="RibP_PPkinase_A"/>
    <property type="match status" value="1"/>
</dbReference>
<dbReference type="InterPro" id="IPR029099">
    <property type="entry name" value="Pribosyltran_N"/>
</dbReference>
<dbReference type="InterPro" id="IPR000836">
    <property type="entry name" value="PRibTrfase_dom"/>
</dbReference>
<dbReference type="InterPro" id="IPR029057">
    <property type="entry name" value="PRTase-like"/>
</dbReference>
<dbReference type="InterPro" id="IPR005946">
    <property type="entry name" value="Rib-P_diPkinase"/>
</dbReference>
<dbReference type="InterPro" id="IPR037514">
    <property type="entry name" value="Rib-P_diPkinase_arc"/>
</dbReference>
<dbReference type="NCBIfam" id="NF002095">
    <property type="entry name" value="PRK00934.1"/>
    <property type="match status" value="1"/>
</dbReference>
<dbReference type="NCBIfam" id="TIGR01251">
    <property type="entry name" value="ribP_PPkin"/>
    <property type="match status" value="1"/>
</dbReference>
<dbReference type="PANTHER" id="PTHR10210">
    <property type="entry name" value="RIBOSE-PHOSPHATE DIPHOSPHOKINASE FAMILY MEMBER"/>
    <property type="match status" value="1"/>
</dbReference>
<dbReference type="PANTHER" id="PTHR10210:SF32">
    <property type="entry name" value="RIBOSE-PHOSPHATE PYROPHOSPHOKINASE 2"/>
    <property type="match status" value="1"/>
</dbReference>
<dbReference type="Pfam" id="PF00156">
    <property type="entry name" value="Pribosyltran"/>
    <property type="match status" value="1"/>
</dbReference>
<dbReference type="Pfam" id="PF13793">
    <property type="entry name" value="Pribosyltran_N"/>
    <property type="match status" value="1"/>
</dbReference>
<dbReference type="SMART" id="SM01400">
    <property type="entry name" value="Pribosyltran_N"/>
    <property type="match status" value="1"/>
</dbReference>
<dbReference type="SUPFAM" id="SSF53271">
    <property type="entry name" value="PRTase-like"/>
    <property type="match status" value="2"/>
</dbReference>
<protein>
    <recommendedName>
        <fullName evidence="1">Ribose-phosphate pyrophosphokinase</fullName>
        <shortName evidence="1">RPPK</shortName>
        <ecNumber evidence="1">2.7.6.1</ecNumber>
    </recommendedName>
    <alternativeName>
        <fullName evidence="1">5-phospho-D-ribosyl alpha-1-diphosphate synthase</fullName>
    </alternativeName>
    <alternativeName>
        <fullName evidence="1">Phosphoribosyl diphosphate synthase</fullName>
    </alternativeName>
    <alternativeName>
        <fullName evidence="1">Phosphoribosyl pyrophosphate synthase</fullName>
        <shortName evidence="1">P-Rib-PP synthase</shortName>
        <shortName evidence="1">PRPP synthase</shortName>
        <shortName evidence="1">PRPPase</shortName>
    </alternativeName>
</protein>
<comment type="function">
    <text evidence="1">Involved in the biosynthesis of the central metabolite phospho-alpha-D-ribosyl-1-pyrophosphate (PRPP) via the transfer of pyrophosphoryl group from ATP to 1-hydroxyl of ribose-5-phosphate (Rib-5-P).</text>
</comment>
<comment type="catalytic activity">
    <reaction evidence="1">
        <text>D-ribose 5-phosphate + ATP = 5-phospho-alpha-D-ribose 1-diphosphate + AMP + H(+)</text>
        <dbReference type="Rhea" id="RHEA:15609"/>
        <dbReference type="ChEBI" id="CHEBI:15378"/>
        <dbReference type="ChEBI" id="CHEBI:30616"/>
        <dbReference type="ChEBI" id="CHEBI:58017"/>
        <dbReference type="ChEBI" id="CHEBI:78346"/>
        <dbReference type="ChEBI" id="CHEBI:456215"/>
        <dbReference type="EC" id="2.7.6.1"/>
    </reaction>
</comment>
<comment type="cofactor">
    <cofactor evidence="1">
        <name>Mg(2+)</name>
        <dbReference type="ChEBI" id="CHEBI:18420"/>
    </cofactor>
    <text evidence="1">Binds 2 Mg(2+) ions per subunit.</text>
</comment>
<comment type="pathway">
    <text evidence="1">Metabolic intermediate biosynthesis; 5-phospho-alpha-D-ribose 1-diphosphate biosynthesis; 5-phospho-alpha-D-ribose 1-diphosphate from D-ribose 5-phosphate (route I): step 1/1.</text>
</comment>
<comment type="subcellular location">
    <subcellularLocation>
        <location evidence="1">Cytoplasm</location>
    </subcellularLocation>
</comment>
<comment type="similarity">
    <text evidence="1">Belongs to the ribose-phosphate pyrophosphokinase family. Class III (archaeal) subfamily.</text>
</comment>
<gene>
    <name evidence="1" type="primary">prs</name>
    <name type="ordered locus">MTH_784</name>
</gene>
<name>KPRS_METTH</name>